<feature type="chain" id="PRO_0000328567" description="Probable methionine--tRNA ligase, cytoplasmic">
    <location>
        <begin position="1"/>
        <end position="736"/>
    </location>
</feature>
<feature type="domain" description="tRNA-binding" evidence="2">
    <location>
        <begin position="573"/>
        <end position="680"/>
    </location>
</feature>
<feature type="short sequence motif" description="'HIGH' region" evidence="1">
    <location>
        <begin position="25"/>
        <end position="35"/>
    </location>
</feature>
<feature type="short sequence motif" description="'KMSKS' region" evidence="1">
    <location>
        <begin position="346"/>
        <end position="350"/>
    </location>
</feature>
<feature type="binding site" evidence="1">
    <location>
        <position position="349"/>
    </location>
    <ligand>
        <name>ATP</name>
        <dbReference type="ChEBI" id="CHEBI:30616"/>
    </ligand>
</feature>
<accession>Q54X95</accession>
<keyword id="KW-0030">Aminoacyl-tRNA synthetase</keyword>
<keyword id="KW-0067">ATP-binding</keyword>
<keyword id="KW-0963">Cytoplasm</keyword>
<keyword id="KW-0436">Ligase</keyword>
<keyword id="KW-0547">Nucleotide-binding</keyword>
<keyword id="KW-0648">Protein biosynthesis</keyword>
<keyword id="KW-1185">Reference proteome</keyword>
<keyword id="KW-0694">RNA-binding</keyword>
<keyword id="KW-0820">tRNA-binding</keyword>
<organism>
    <name type="scientific">Dictyostelium discoideum</name>
    <name type="common">Social amoeba</name>
    <dbReference type="NCBI Taxonomy" id="44689"/>
    <lineage>
        <taxon>Eukaryota</taxon>
        <taxon>Amoebozoa</taxon>
        <taxon>Evosea</taxon>
        <taxon>Eumycetozoa</taxon>
        <taxon>Dictyostelia</taxon>
        <taxon>Dictyosteliales</taxon>
        <taxon>Dictyosteliaceae</taxon>
        <taxon>Dictyostelium</taxon>
    </lineage>
</organism>
<reference key="1">
    <citation type="journal article" date="2005" name="Nature">
        <title>The genome of the social amoeba Dictyostelium discoideum.</title>
        <authorList>
            <person name="Eichinger L."/>
            <person name="Pachebat J.A."/>
            <person name="Gloeckner G."/>
            <person name="Rajandream M.A."/>
            <person name="Sucgang R."/>
            <person name="Berriman M."/>
            <person name="Song J."/>
            <person name="Olsen R."/>
            <person name="Szafranski K."/>
            <person name="Xu Q."/>
            <person name="Tunggal B."/>
            <person name="Kummerfeld S."/>
            <person name="Madera M."/>
            <person name="Konfortov B.A."/>
            <person name="Rivero F."/>
            <person name="Bankier A.T."/>
            <person name="Lehmann R."/>
            <person name="Hamlin N."/>
            <person name="Davies R."/>
            <person name="Gaudet P."/>
            <person name="Fey P."/>
            <person name="Pilcher K."/>
            <person name="Chen G."/>
            <person name="Saunders D."/>
            <person name="Sodergren E.J."/>
            <person name="Davis P."/>
            <person name="Kerhornou A."/>
            <person name="Nie X."/>
            <person name="Hall N."/>
            <person name="Anjard C."/>
            <person name="Hemphill L."/>
            <person name="Bason N."/>
            <person name="Farbrother P."/>
            <person name="Desany B."/>
            <person name="Just E."/>
            <person name="Morio T."/>
            <person name="Rost R."/>
            <person name="Churcher C.M."/>
            <person name="Cooper J."/>
            <person name="Haydock S."/>
            <person name="van Driessche N."/>
            <person name="Cronin A."/>
            <person name="Goodhead I."/>
            <person name="Muzny D.M."/>
            <person name="Mourier T."/>
            <person name="Pain A."/>
            <person name="Lu M."/>
            <person name="Harper D."/>
            <person name="Lindsay R."/>
            <person name="Hauser H."/>
            <person name="James K.D."/>
            <person name="Quiles M."/>
            <person name="Madan Babu M."/>
            <person name="Saito T."/>
            <person name="Buchrieser C."/>
            <person name="Wardroper A."/>
            <person name="Felder M."/>
            <person name="Thangavelu M."/>
            <person name="Johnson D."/>
            <person name="Knights A."/>
            <person name="Loulseged H."/>
            <person name="Mungall K.L."/>
            <person name="Oliver K."/>
            <person name="Price C."/>
            <person name="Quail M.A."/>
            <person name="Urushihara H."/>
            <person name="Hernandez J."/>
            <person name="Rabbinowitsch E."/>
            <person name="Steffen D."/>
            <person name="Sanders M."/>
            <person name="Ma J."/>
            <person name="Kohara Y."/>
            <person name="Sharp S."/>
            <person name="Simmonds M.N."/>
            <person name="Spiegler S."/>
            <person name="Tivey A."/>
            <person name="Sugano S."/>
            <person name="White B."/>
            <person name="Walker D."/>
            <person name="Woodward J.R."/>
            <person name="Winckler T."/>
            <person name="Tanaka Y."/>
            <person name="Shaulsky G."/>
            <person name="Schleicher M."/>
            <person name="Weinstock G.M."/>
            <person name="Rosenthal A."/>
            <person name="Cox E.C."/>
            <person name="Chisholm R.L."/>
            <person name="Gibbs R.A."/>
            <person name="Loomis W.F."/>
            <person name="Platzer M."/>
            <person name="Kay R.R."/>
            <person name="Williams J.G."/>
            <person name="Dear P.H."/>
            <person name="Noegel A.A."/>
            <person name="Barrell B.G."/>
            <person name="Kuspa A."/>
        </authorList>
    </citation>
    <scope>NUCLEOTIDE SEQUENCE [LARGE SCALE GENOMIC DNA]</scope>
    <source>
        <strain>AX4</strain>
    </source>
</reference>
<sequence>MSKPSNTPPLPKDGERNILITSALPYVNNVPHLGNIIGCVLSADVYARYCRLKNYNCIYICGTDEYGTATETKALSEGCTPKEICDKYHEIHKEIYEWFNISFDKFGRTSTNSQTEIAQDIFNKIKDNGYTLTQEIEQLYCEQTCKMFLADRFVEGTCPHCKFEDARGDQCDGCSKLLNPTELINPRCKVCSKPPVIKSTKHIFIDLPQLQQQVDQFVETNSKGGNWSENSIAITNTWVKGELKPRCITRDLKWGTPVPMEEFKDKVFYVWFDAPIGYISITAEYTNEWEKWWKNPENVKLVQFMGKDNVPFHTVIFPASLIGSKDNYTLLNNLSTTEFLNYETGKFSKSRNTGVFGDGAKATGIPSEVWRFYLLNNRPESSDSIFSWDDFNFKNNELLNNFGNLVNRVLKMLNTNAAFNGVVPKIGELNEVDKKLVQEVDEHLVQYFQKLEEISLKEGLKIAMSISKLGNTYMQDNKPWDLSGKDNERCGQVLAILINLIKLLSTLLEPYIPSLTDKVHQQLNVEPTKYSTHFDINAIPAGHEISKEILPLVKKIEADDLKKWRTKFSGIGPEFPIDMKIATVLEVNDHPSAENLYVIKLSLGGDQTKTAVSGIKANFEKSQLIGKKLAVVLNLKPSKFKGVLSEAMILVADDGQATKESLSFLVPSNPQSIEAGSKIAGKGMSIKPKPTIDYQKEFLHYDLTCIDKIISYNKSQLFINQNEPLVSEKIGNGKVR</sequence>
<proteinExistence type="inferred from homology"/>
<gene>
    <name type="primary">metS</name>
    <name type="ORF">DDB_G0279113</name>
</gene>
<comment type="catalytic activity">
    <reaction>
        <text>tRNA(Met) + L-methionine + ATP = L-methionyl-tRNA(Met) + AMP + diphosphate</text>
        <dbReference type="Rhea" id="RHEA:13481"/>
        <dbReference type="Rhea" id="RHEA-COMP:9667"/>
        <dbReference type="Rhea" id="RHEA-COMP:9698"/>
        <dbReference type="ChEBI" id="CHEBI:30616"/>
        <dbReference type="ChEBI" id="CHEBI:33019"/>
        <dbReference type="ChEBI" id="CHEBI:57844"/>
        <dbReference type="ChEBI" id="CHEBI:78442"/>
        <dbReference type="ChEBI" id="CHEBI:78530"/>
        <dbReference type="ChEBI" id="CHEBI:456215"/>
        <dbReference type="EC" id="6.1.1.10"/>
    </reaction>
</comment>
<comment type="subcellular location">
    <subcellularLocation>
        <location evidence="1">Cytoplasm</location>
    </subcellularLocation>
</comment>
<comment type="similarity">
    <text evidence="3">Belongs to the class-I aminoacyl-tRNA synthetase family.</text>
</comment>
<protein>
    <recommendedName>
        <fullName>Probable methionine--tRNA ligase, cytoplasmic</fullName>
        <ecNumber>6.1.1.10</ecNumber>
    </recommendedName>
    <alternativeName>
        <fullName>Methionyl-tRNA synthetase</fullName>
        <shortName>MetRS</shortName>
    </alternativeName>
</protein>
<evidence type="ECO:0000250" key="1"/>
<evidence type="ECO:0000255" key="2">
    <source>
        <dbReference type="PROSITE-ProRule" id="PRU00209"/>
    </source>
</evidence>
<evidence type="ECO:0000305" key="3"/>
<name>SYMC_DICDI</name>
<dbReference type="EC" id="6.1.1.10"/>
<dbReference type="EMBL" id="AAFI02000027">
    <property type="protein sequence ID" value="EAL67895.1"/>
    <property type="molecule type" value="Genomic_DNA"/>
</dbReference>
<dbReference type="RefSeq" id="XP_641872.1">
    <property type="nucleotide sequence ID" value="XM_636780.1"/>
</dbReference>
<dbReference type="SMR" id="Q54X95"/>
<dbReference type="FunCoup" id="Q54X95">
    <property type="interactions" value="885"/>
</dbReference>
<dbReference type="STRING" id="44689.Q54X95"/>
<dbReference type="PaxDb" id="44689-DDB0231297"/>
<dbReference type="EnsemblProtists" id="EAL67895">
    <property type="protein sequence ID" value="EAL67895"/>
    <property type="gene ID" value="DDB_G0279113"/>
</dbReference>
<dbReference type="GeneID" id="8621878"/>
<dbReference type="KEGG" id="ddi:DDB_G0279113"/>
<dbReference type="dictyBase" id="DDB_G0279113">
    <property type="gene designation" value="metS"/>
</dbReference>
<dbReference type="VEuPathDB" id="AmoebaDB:DDB_G0279113"/>
<dbReference type="eggNOG" id="KOG1247">
    <property type="taxonomic scope" value="Eukaryota"/>
</dbReference>
<dbReference type="eggNOG" id="KOG2241">
    <property type="taxonomic scope" value="Eukaryota"/>
</dbReference>
<dbReference type="HOGENOM" id="CLU_009710_1_0_1"/>
<dbReference type="InParanoid" id="Q54X95"/>
<dbReference type="OMA" id="HLNTTEY"/>
<dbReference type="PhylomeDB" id="Q54X95"/>
<dbReference type="Reactome" id="R-DDI-9856649">
    <property type="pathway name" value="Transcriptional and post-translational regulation of MITF-M expression and activity"/>
</dbReference>
<dbReference type="PRO" id="PR:Q54X95"/>
<dbReference type="Proteomes" id="UP000002195">
    <property type="component" value="Chromosome 3"/>
</dbReference>
<dbReference type="GO" id="GO:0017101">
    <property type="term" value="C:aminoacyl-tRNA synthetase multienzyme complex"/>
    <property type="evidence" value="ECO:0000318"/>
    <property type="project" value="GO_Central"/>
</dbReference>
<dbReference type="GO" id="GO:0005737">
    <property type="term" value="C:cytoplasm"/>
    <property type="evidence" value="ECO:0000250"/>
    <property type="project" value="dictyBase"/>
</dbReference>
<dbReference type="GO" id="GO:0005829">
    <property type="term" value="C:cytosol"/>
    <property type="evidence" value="ECO:0000318"/>
    <property type="project" value="GO_Central"/>
</dbReference>
<dbReference type="GO" id="GO:0017102">
    <property type="term" value="C:methionyl glutamyl tRNA synthetase complex"/>
    <property type="evidence" value="ECO:0000250"/>
    <property type="project" value="dictyBase"/>
</dbReference>
<dbReference type="GO" id="GO:0005524">
    <property type="term" value="F:ATP binding"/>
    <property type="evidence" value="ECO:0007669"/>
    <property type="project" value="UniProtKB-KW"/>
</dbReference>
<dbReference type="GO" id="GO:0004825">
    <property type="term" value="F:methionine-tRNA ligase activity"/>
    <property type="evidence" value="ECO:0000250"/>
    <property type="project" value="dictyBase"/>
</dbReference>
<dbReference type="GO" id="GO:0000049">
    <property type="term" value="F:tRNA binding"/>
    <property type="evidence" value="ECO:0007669"/>
    <property type="project" value="UniProtKB-KW"/>
</dbReference>
<dbReference type="GO" id="GO:0006431">
    <property type="term" value="P:methionyl-tRNA aminoacylation"/>
    <property type="evidence" value="ECO:0000250"/>
    <property type="project" value="dictyBase"/>
</dbReference>
<dbReference type="CDD" id="cd07957">
    <property type="entry name" value="Anticodon_Ia_Met"/>
    <property type="match status" value="1"/>
</dbReference>
<dbReference type="CDD" id="cd00814">
    <property type="entry name" value="MetRS_core"/>
    <property type="match status" value="1"/>
</dbReference>
<dbReference type="CDD" id="cd02798">
    <property type="entry name" value="tRNA_bind_CsaA"/>
    <property type="match status" value="1"/>
</dbReference>
<dbReference type="FunFam" id="2.20.28.20:FF:000001">
    <property type="entry name" value="Methionine--tRNA ligase"/>
    <property type="match status" value="1"/>
</dbReference>
<dbReference type="FunFam" id="2.40.50.140:FF:000434">
    <property type="entry name" value="Methionyl-tRNA synthetase putative"/>
    <property type="match status" value="1"/>
</dbReference>
<dbReference type="FunFam" id="1.10.730.10:FF:000031">
    <property type="entry name" value="Putative Methionyl-tRNA synthetase"/>
    <property type="match status" value="1"/>
</dbReference>
<dbReference type="Gene3D" id="3.40.50.620">
    <property type="entry name" value="HUPs"/>
    <property type="match status" value="1"/>
</dbReference>
<dbReference type="Gene3D" id="1.10.730.10">
    <property type="entry name" value="Isoleucyl-tRNA Synthetase, Domain 1"/>
    <property type="match status" value="1"/>
</dbReference>
<dbReference type="Gene3D" id="2.20.28.20">
    <property type="entry name" value="Methionyl-tRNA synthetase, Zn-domain"/>
    <property type="match status" value="1"/>
</dbReference>
<dbReference type="Gene3D" id="2.40.50.140">
    <property type="entry name" value="Nucleic acid-binding proteins"/>
    <property type="match status" value="1"/>
</dbReference>
<dbReference type="InterPro" id="IPR001412">
    <property type="entry name" value="aa-tRNA-synth_I_CS"/>
</dbReference>
<dbReference type="InterPro" id="IPR041872">
    <property type="entry name" value="Anticodon_Met"/>
</dbReference>
<dbReference type="InterPro" id="IPR023458">
    <property type="entry name" value="Met-tRNA_ligase_1"/>
</dbReference>
<dbReference type="InterPro" id="IPR014758">
    <property type="entry name" value="Met-tRNA_synth"/>
</dbReference>
<dbReference type="InterPro" id="IPR015413">
    <property type="entry name" value="Methionyl/Leucyl_tRNA_Synth"/>
</dbReference>
<dbReference type="InterPro" id="IPR033911">
    <property type="entry name" value="MetRS_core"/>
</dbReference>
<dbReference type="InterPro" id="IPR029038">
    <property type="entry name" value="MetRS_Zn"/>
</dbReference>
<dbReference type="InterPro" id="IPR012340">
    <property type="entry name" value="NA-bd_OB-fold"/>
</dbReference>
<dbReference type="InterPro" id="IPR014729">
    <property type="entry name" value="Rossmann-like_a/b/a_fold"/>
</dbReference>
<dbReference type="InterPro" id="IPR002547">
    <property type="entry name" value="tRNA-bd_dom"/>
</dbReference>
<dbReference type="InterPro" id="IPR009080">
    <property type="entry name" value="tRNAsynth_Ia_anticodon-bd"/>
</dbReference>
<dbReference type="NCBIfam" id="TIGR00398">
    <property type="entry name" value="metG"/>
    <property type="match status" value="1"/>
</dbReference>
<dbReference type="NCBIfam" id="NF001100">
    <property type="entry name" value="PRK00133.1"/>
    <property type="match status" value="1"/>
</dbReference>
<dbReference type="PANTHER" id="PTHR45765">
    <property type="entry name" value="METHIONINE--TRNA LIGASE"/>
    <property type="match status" value="1"/>
</dbReference>
<dbReference type="PANTHER" id="PTHR45765:SF1">
    <property type="entry name" value="METHIONINE--TRNA LIGASE, CYTOPLASMIC"/>
    <property type="match status" value="1"/>
</dbReference>
<dbReference type="Pfam" id="PF19303">
    <property type="entry name" value="Anticodon_3"/>
    <property type="match status" value="1"/>
</dbReference>
<dbReference type="Pfam" id="PF09334">
    <property type="entry name" value="tRNA-synt_1g"/>
    <property type="match status" value="1"/>
</dbReference>
<dbReference type="Pfam" id="PF01588">
    <property type="entry name" value="tRNA_bind"/>
    <property type="match status" value="1"/>
</dbReference>
<dbReference type="PRINTS" id="PR01041">
    <property type="entry name" value="TRNASYNTHMET"/>
</dbReference>
<dbReference type="SUPFAM" id="SSF47323">
    <property type="entry name" value="Anticodon-binding domain of a subclass of class I aminoacyl-tRNA synthetases"/>
    <property type="match status" value="1"/>
</dbReference>
<dbReference type="SUPFAM" id="SSF57770">
    <property type="entry name" value="Methionyl-tRNA synthetase (MetRS), Zn-domain"/>
    <property type="match status" value="1"/>
</dbReference>
<dbReference type="SUPFAM" id="SSF50249">
    <property type="entry name" value="Nucleic acid-binding proteins"/>
    <property type="match status" value="1"/>
</dbReference>
<dbReference type="SUPFAM" id="SSF52374">
    <property type="entry name" value="Nucleotidylyl transferase"/>
    <property type="match status" value="1"/>
</dbReference>
<dbReference type="PROSITE" id="PS00178">
    <property type="entry name" value="AA_TRNA_LIGASE_I"/>
    <property type="match status" value="1"/>
</dbReference>
<dbReference type="PROSITE" id="PS50886">
    <property type="entry name" value="TRBD"/>
    <property type="match status" value="1"/>
</dbReference>